<organism>
    <name type="scientific">Aliivibrio fischeri (strain ATCC 700601 / ES114)</name>
    <name type="common">Vibrio fischeri</name>
    <dbReference type="NCBI Taxonomy" id="312309"/>
    <lineage>
        <taxon>Bacteria</taxon>
        <taxon>Pseudomonadati</taxon>
        <taxon>Pseudomonadota</taxon>
        <taxon>Gammaproteobacteria</taxon>
        <taxon>Vibrionales</taxon>
        <taxon>Vibrionaceae</taxon>
        <taxon>Aliivibrio</taxon>
    </lineage>
</organism>
<sequence length="471" mass="51674">MTNSTPIRSTHFDAIVIGSGPGGEGAAMGLTKANLNVAIIEREPSVGGGCTHWGTIPSKALRHAVSRIIEFNSNPLYCKNNTSLHSTFSDILGHAKSVIDKQTRMRQGFYDRNQCSLIFGEASFVEKNTVAVTAKDGSIETYTADKFIIATGSRPYRPEGINFNHSRVYDSDSILSLKHDPRHIIIYGAGVIGSEYASIFRGLGVKVDLVNTRDRLLSFLDNEMSDALSYHFWNSGIVTRNDENFEHIEANDDGVIMHLESGKKMKADCILFANGRTGNTDKLNLSAVGLEADSRGQLKVNDNYQTDVEHIYAVGDVIGYPSLASAAYDQGRFTAQAITKGKAEARLIDHIPTGIYTIPEISSVGKTEQELTAAKVPYEVGRSSFKHLARAQIAGKDIGSLKILFHRETKEILGIHCFGERAAEIIHIGQAIMEQKGEANTIEYFVNTTFNYPTMAEAYRVAALNGLNRLF</sequence>
<accession>Q5E212</accession>
<protein>
    <recommendedName>
        <fullName evidence="1">Soluble pyridine nucleotide transhydrogenase</fullName>
        <shortName evidence="1">STH</shortName>
        <ecNumber evidence="1">1.6.1.1</ecNumber>
    </recommendedName>
    <alternativeName>
        <fullName evidence="1">NAD(P)(+) transhydrogenase [B-specific]</fullName>
    </alternativeName>
</protein>
<gene>
    <name evidence="1" type="primary">sthA</name>
    <name type="ordered locus">VF_2439</name>
</gene>
<evidence type="ECO:0000255" key="1">
    <source>
        <dbReference type="HAMAP-Rule" id="MF_00247"/>
    </source>
</evidence>
<evidence type="ECO:0000305" key="2"/>
<keyword id="KW-0963">Cytoplasm</keyword>
<keyword id="KW-0274">FAD</keyword>
<keyword id="KW-0285">Flavoprotein</keyword>
<keyword id="KW-0520">NAD</keyword>
<keyword id="KW-0521">NADP</keyword>
<keyword id="KW-0560">Oxidoreductase</keyword>
<keyword id="KW-1185">Reference proteome</keyword>
<name>STHA_ALIF1</name>
<reference key="1">
    <citation type="journal article" date="2005" name="Proc. Natl. Acad. Sci. U.S.A.">
        <title>Complete genome sequence of Vibrio fischeri: a symbiotic bacterium with pathogenic congeners.</title>
        <authorList>
            <person name="Ruby E.G."/>
            <person name="Urbanowski M."/>
            <person name="Campbell J."/>
            <person name="Dunn A."/>
            <person name="Faini M."/>
            <person name="Gunsalus R."/>
            <person name="Lostroh P."/>
            <person name="Lupp C."/>
            <person name="McCann J."/>
            <person name="Millikan D."/>
            <person name="Schaefer A."/>
            <person name="Stabb E."/>
            <person name="Stevens A."/>
            <person name="Visick K."/>
            <person name="Whistler C."/>
            <person name="Greenberg E.P."/>
        </authorList>
    </citation>
    <scope>NUCLEOTIDE SEQUENCE [LARGE SCALE GENOMIC DNA]</scope>
    <source>
        <strain>ATCC 700601 / ES114</strain>
    </source>
</reference>
<dbReference type="EC" id="1.6.1.1" evidence="1"/>
<dbReference type="EMBL" id="CP000020">
    <property type="protein sequence ID" value="AAW86934.1"/>
    <property type="status" value="ALT_INIT"/>
    <property type="molecule type" value="Genomic_DNA"/>
</dbReference>
<dbReference type="RefSeq" id="WP_017019516.1">
    <property type="nucleotide sequence ID" value="NZ_CAWLES010000001.1"/>
</dbReference>
<dbReference type="RefSeq" id="YP_205822.1">
    <property type="nucleotide sequence ID" value="NC_006840.2"/>
</dbReference>
<dbReference type="SMR" id="Q5E212"/>
<dbReference type="STRING" id="312309.VF_2439"/>
<dbReference type="EnsemblBacteria" id="AAW86934">
    <property type="protein sequence ID" value="AAW86934"/>
    <property type="gene ID" value="VF_2439"/>
</dbReference>
<dbReference type="GeneID" id="54165170"/>
<dbReference type="KEGG" id="vfi:VF_2439"/>
<dbReference type="PATRIC" id="fig|312309.11.peg.2467"/>
<dbReference type="eggNOG" id="COG1249">
    <property type="taxonomic scope" value="Bacteria"/>
</dbReference>
<dbReference type="HOGENOM" id="CLU_016755_0_0_6"/>
<dbReference type="OrthoDB" id="9800167at2"/>
<dbReference type="Proteomes" id="UP000000537">
    <property type="component" value="Chromosome I"/>
</dbReference>
<dbReference type="GO" id="GO:0005829">
    <property type="term" value="C:cytosol"/>
    <property type="evidence" value="ECO:0007669"/>
    <property type="project" value="TreeGrafter"/>
</dbReference>
<dbReference type="GO" id="GO:0004148">
    <property type="term" value="F:dihydrolipoyl dehydrogenase (NADH) activity"/>
    <property type="evidence" value="ECO:0007669"/>
    <property type="project" value="TreeGrafter"/>
</dbReference>
<dbReference type="GO" id="GO:0050660">
    <property type="term" value="F:flavin adenine dinucleotide binding"/>
    <property type="evidence" value="ECO:0007669"/>
    <property type="project" value="TreeGrafter"/>
</dbReference>
<dbReference type="GO" id="GO:0003957">
    <property type="term" value="F:NAD(P)+ transhydrogenase (Si-specific) activity"/>
    <property type="evidence" value="ECO:0007669"/>
    <property type="project" value="UniProtKB-UniRule"/>
</dbReference>
<dbReference type="GO" id="GO:0006103">
    <property type="term" value="P:2-oxoglutarate metabolic process"/>
    <property type="evidence" value="ECO:0007669"/>
    <property type="project" value="TreeGrafter"/>
</dbReference>
<dbReference type="GO" id="GO:0006739">
    <property type="term" value="P:NADP metabolic process"/>
    <property type="evidence" value="ECO:0007669"/>
    <property type="project" value="UniProtKB-UniRule"/>
</dbReference>
<dbReference type="FunFam" id="3.30.390.30:FF:000002">
    <property type="entry name" value="Soluble pyridine nucleotide transhydrogenase"/>
    <property type="match status" value="1"/>
</dbReference>
<dbReference type="FunFam" id="3.50.50.60:FF:000008">
    <property type="entry name" value="Soluble pyridine nucleotide transhydrogenase"/>
    <property type="match status" value="1"/>
</dbReference>
<dbReference type="Gene3D" id="3.30.390.30">
    <property type="match status" value="1"/>
</dbReference>
<dbReference type="Gene3D" id="3.50.50.60">
    <property type="entry name" value="FAD/NAD(P)-binding domain"/>
    <property type="match status" value="2"/>
</dbReference>
<dbReference type="HAMAP" id="MF_00247">
    <property type="entry name" value="SthA"/>
    <property type="match status" value="1"/>
</dbReference>
<dbReference type="InterPro" id="IPR050151">
    <property type="entry name" value="Class-I_Pyr_Nuc-Dis_Oxidored"/>
</dbReference>
<dbReference type="InterPro" id="IPR036188">
    <property type="entry name" value="FAD/NAD-bd_sf"/>
</dbReference>
<dbReference type="InterPro" id="IPR023753">
    <property type="entry name" value="FAD/NAD-binding_dom"/>
</dbReference>
<dbReference type="InterPro" id="IPR016156">
    <property type="entry name" value="FAD/NAD-linked_Rdtase_dimer_sf"/>
</dbReference>
<dbReference type="InterPro" id="IPR001100">
    <property type="entry name" value="Pyr_nuc-diS_OxRdtase"/>
</dbReference>
<dbReference type="InterPro" id="IPR004099">
    <property type="entry name" value="Pyr_nucl-diS_OxRdtase_dimer"/>
</dbReference>
<dbReference type="InterPro" id="IPR022962">
    <property type="entry name" value="STH_gammaproteobact"/>
</dbReference>
<dbReference type="NCBIfam" id="NF003585">
    <property type="entry name" value="PRK05249.1"/>
    <property type="match status" value="1"/>
</dbReference>
<dbReference type="PANTHER" id="PTHR22912">
    <property type="entry name" value="DISULFIDE OXIDOREDUCTASE"/>
    <property type="match status" value="1"/>
</dbReference>
<dbReference type="PANTHER" id="PTHR22912:SF93">
    <property type="entry name" value="SOLUBLE PYRIDINE NUCLEOTIDE TRANSHYDROGENASE"/>
    <property type="match status" value="1"/>
</dbReference>
<dbReference type="Pfam" id="PF07992">
    <property type="entry name" value="Pyr_redox_2"/>
    <property type="match status" value="1"/>
</dbReference>
<dbReference type="Pfam" id="PF02852">
    <property type="entry name" value="Pyr_redox_dim"/>
    <property type="match status" value="1"/>
</dbReference>
<dbReference type="PIRSF" id="PIRSF000350">
    <property type="entry name" value="Mercury_reductase_MerA"/>
    <property type="match status" value="1"/>
</dbReference>
<dbReference type="PRINTS" id="PR00368">
    <property type="entry name" value="FADPNR"/>
</dbReference>
<dbReference type="PRINTS" id="PR00411">
    <property type="entry name" value="PNDRDTASEI"/>
</dbReference>
<dbReference type="SUPFAM" id="SSF51905">
    <property type="entry name" value="FAD/NAD(P)-binding domain"/>
    <property type="match status" value="1"/>
</dbReference>
<dbReference type="SUPFAM" id="SSF55424">
    <property type="entry name" value="FAD/NAD-linked reductases, dimerisation (C-terminal) domain"/>
    <property type="match status" value="1"/>
</dbReference>
<proteinExistence type="inferred from homology"/>
<feature type="chain" id="PRO_0000260245" description="Soluble pyridine nucleotide transhydrogenase">
    <location>
        <begin position="1"/>
        <end position="471"/>
    </location>
</feature>
<feature type="binding site" evidence="1">
    <location>
        <begin position="41"/>
        <end position="50"/>
    </location>
    <ligand>
        <name>FAD</name>
        <dbReference type="ChEBI" id="CHEBI:57692"/>
    </ligand>
</feature>
<comment type="function">
    <text evidence="1">Conversion of NADPH, generated by peripheral catabolic pathways, to NADH, which can enter the respiratory chain for energy generation.</text>
</comment>
<comment type="catalytic activity">
    <reaction evidence="1">
        <text>NAD(+) + NADPH = NADH + NADP(+)</text>
        <dbReference type="Rhea" id="RHEA:11692"/>
        <dbReference type="ChEBI" id="CHEBI:57540"/>
        <dbReference type="ChEBI" id="CHEBI:57783"/>
        <dbReference type="ChEBI" id="CHEBI:57945"/>
        <dbReference type="ChEBI" id="CHEBI:58349"/>
        <dbReference type="EC" id="1.6.1.1"/>
    </reaction>
</comment>
<comment type="cofactor">
    <cofactor evidence="1">
        <name>FAD</name>
        <dbReference type="ChEBI" id="CHEBI:57692"/>
    </cofactor>
    <text evidence="1">Binds 1 FAD per subunit.</text>
</comment>
<comment type="subcellular location">
    <subcellularLocation>
        <location evidence="1">Cytoplasm</location>
    </subcellularLocation>
</comment>
<comment type="similarity">
    <text evidence="1">Belongs to the class-I pyridine nucleotide-disulfide oxidoreductase family.</text>
</comment>
<comment type="sequence caution" evidence="2">
    <conflict type="erroneous initiation">
        <sequence resource="EMBL-CDS" id="AAW86934"/>
    </conflict>
</comment>